<reference key="1">
    <citation type="journal article" date="2001" name="Proc. Natl. Acad. Sci. U.S.A.">
        <title>Complete genomic sequence of Pasteurella multocida Pm70.</title>
        <authorList>
            <person name="May B.J."/>
            <person name="Zhang Q."/>
            <person name="Li L.L."/>
            <person name="Paustian M.L."/>
            <person name="Whittam T.S."/>
            <person name="Kapur V."/>
        </authorList>
    </citation>
    <scope>NUCLEOTIDE SEQUENCE [LARGE SCALE GENOMIC DNA]</scope>
    <source>
        <strain>Pm70</strain>
    </source>
</reference>
<evidence type="ECO:0000255" key="1">
    <source>
        <dbReference type="HAMAP-Rule" id="MF_00811"/>
    </source>
</evidence>
<keyword id="KW-0012">Acyltransferase</keyword>
<keyword id="KW-0028">Amino-acid biosynthesis</keyword>
<keyword id="KW-0963">Cytoplasm</keyword>
<keyword id="KW-0220">Diaminopimelate biosynthesis</keyword>
<keyword id="KW-0457">Lysine biosynthesis</keyword>
<keyword id="KW-1185">Reference proteome</keyword>
<keyword id="KW-0677">Repeat</keyword>
<keyword id="KW-0808">Transferase</keyword>
<comment type="catalytic activity">
    <reaction evidence="1">
        <text>(S)-2,3,4,5-tetrahydrodipicolinate + succinyl-CoA + H2O = (S)-2-succinylamino-6-oxoheptanedioate + CoA</text>
        <dbReference type="Rhea" id="RHEA:17325"/>
        <dbReference type="ChEBI" id="CHEBI:15377"/>
        <dbReference type="ChEBI" id="CHEBI:15685"/>
        <dbReference type="ChEBI" id="CHEBI:16845"/>
        <dbReference type="ChEBI" id="CHEBI:57287"/>
        <dbReference type="ChEBI" id="CHEBI:57292"/>
        <dbReference type="EC" id="2.3.1.117"/>
    </reaction>
</comment>
<comment type="pathway">
    <text evidence="1">Amino-acid biosynthesis; L-lysine biosynthesis via DAP pathway; LL-2,6-diaminopimelate from (S)-tetrahydrodipicolinate (succinylase route): step 1/3.</text>
</comment>
<comment type="subunit">
    <text evidence="1">Homotrimer.</text>
</comment>
<comment type="subcellular location">
    <subcellularLocation>
        <location evidence="1">Cytoplasm</location>
    </subcellularLocation>
</comment>
<comment type="similarity">
    <text evidence="1">Belongs to the transferase hexapeptide repeat family.</text>
</comment>
<feature type="chain" id="PRO_0000196954" description="2,3,4,5-tetrahydropyridine-2,6-dicarboxylate N-succinyltransferase">
    <location>
        <begin position="1"/>
        <end position="274"/>
    </location>
</feature>
<feature type="binding site" evidence="1">
    <location>
        <position position="103"/>
    </location>
    <ligand>
        <name>substrate</name>
    </ligand>
</feature>
<feature type="binding site" evidence="1">
    <location>
        <position position="140"/>
    </location>
    <ligand>
        <name>substrate</name>
    </ligand>
</feature>
<sequence>MSLQHIIEAAFEKRAEITPKTVDAQTRAAIEEAIEGLDSGKYRVAEKIDGEWVTHQWLKKAVLLSFRINDNELVAGSETNYYDKVPMKFAEYDAARFQQEGFRVVPPAAVRKGAYIAKNTVLMPSYVNIGARVDEGTMVDTWATVGSCAQIGKNVHLSGGVGIGGVLEPLQANPTIIEDNCFIGARSEIVEGVIVEEGSVISMGVFIGQSTKIYDRETGEVTYGRVPAGSVVVSGSLPSKCGKYSLYCAVIVKKVDAKTLGKVGINELLRTIDE</sequence>
<name>DAPD_PASMU</name>
<proteinExistence type="inferred from homology"/>
<accession>Q9CMZ2</accession>
<dbReference type="EC" id="2.3.1.117" evidence="1"/>
<dbReference type="EMBL" id="AE004439">
    <property type="protein sequence ID" value="AAK02742.1"/>
    <property type="molecule type" value="Genomic_DNA"/>
</dbReference>
<dbReference type="RefSeq" id="WP_005754068.1">
    <property type="nucleotide sequence ID" value="NC_002663.1"/>
</dbReference>
<dbReference type="SMR" id="Q9CMZ2"/>
<dbReference type="STRING" id="272843.PM0658"/>
<dbReference type="EnsemblBacteria" id="AAK02742">
    <property type="protein sequence ID" value="AAK02742"/>
    <property type="gene ID" value="PM0658"/>
</dbReference>
<dbReference type="GeneID" id="77207918"/>
<dbReference type="KEGG" id="pmu:PM0658"/>
<dbReference type="HOGENOM" id="CLU_050859_0_1_6"/>
<dbReference type="OrthoDB" id="9775362at2"/>
<dbReference type="UniPathway" id="UPA00034">
    <property type="reaction ID" value="UER00019"/>
</dbReference>
<dbReference type="Proteomes" id="UP000000809">
    <property type="component" value="Chromosome"/>
</dbReference>
<dbReference type="GO" id="GO:0005737">
    <property type="term" value="C:cytoplasm"/>
    <property type="evidence" value="ECO:0007669"/>
    <property type="project" value="UniProtKB-SubCell"/>
</dbReference>
<dbReference type="GO" id="GO:0008666">
    <property type="term" value="F:2,3,4,5-tetrahydropyridine-2,6-dicarboxylate N-succinyltransferase activity"/>
    <property type="evidence" value="ECO:0007669"/>
    <property type="project" value="UniProtKB-UniRule"/>
</dbReference>
<dbReference type="GO" id="GO:0016779">
    <property type="term" value="F:nucleotidyltransferase activity"/>
    <property type="evidence" value="ECO:0007669"/>
    <property type="project" value="TreeGrafter"/>
</dbReference>
<dbReference type="GO" id="GO:0019877">
    <property type="term" value="P:diaminopimelate biosynthetic process"/>
    <property type="evidence" value="ECO:0007669"/>
    <property type="project" value="UniProtKB-UniRule"/>
</dbReference>
<dbReference type="GO" id="GO:0009089">
    <property type="term" value="P:lysine biosynthetic process via diaminopimelate"/>
    <property type="evidence" value="ECO:0007669"/>
    <property type="project" value="UniProtKB-UniRule"/>
</dbReference>
<dbReference type="CDD" id="cd03350">
    <property type="entry name" value="LbH_THP_succinylT"/>
    <property type="match status" value="1"/>
</dbReference>
<dbReference type="Gene3D" id="2.160.10.10">
    <property type="entry name" value="Hexapeptide repeat proteins"/>
    <property type="match status" value="1"/>
</dbReference>
<dbReference type="Gene3D" id="1.10.166.10">
    <property type="entry name" value="Tetrahydrodipicolinate-N-succinyltransferase, N-terminal domain"/>
    <property type="match status" value="1"/>
</dbReference>
<dbReference type="HAMAP" id="MF_00811">
    <property type="entry name" value="DapD"/>
    <property type="match status" value="1"/>
</dbReference>
<dbReference type="InterPro" id="IPR005664">
    <property type="entry name" value="DapD_Trfase_Hexpep_rpt_fam"/>
</dbReference>
<dbReference type="InterPro" id="IPR001451">
    <property type="entry name" value="Hexapep"/>
</dbReference>
<dbReference type="InterPro" id="IPR018357">
    <property type="entry name" value="Hexapep_transf_CS"/>
</dbReference>
<dbReference type="InterPro" id="IPR023180">
    <property type="entry name" value="THP_succinylTrfase_dom1"/>
</dbReference>
<dbReference type="InterPro" id="IPR037133">
    <property type="entry name" value="THP_succinylTrfase_N_sf"/>
</dbReference>
<dbReference type="InterPro" id="IPR011004">
    <property type="entry name" value="Trimer_LpxA-like_sf"/>
</dbReference>
<dbReference type="NCBIfam" id="TIGR00965">
    <property type="entry name" value="dapD"/>
    <property type="match status" value="1"/>
</dbReference>
<dbReference type="NCBIfam" id="NF008808">
    <property type="entry name" value="PRK11830.1"/>
    <property type="match status" value="1"/>
</dbReference>
<dbReference type="PANTHER" id="PTHR19136:SF52">
    <property type="entry name" value="2,3,4,5-TETRAHYDROPYRIDINE-2,6-DICARBOXYLATE N-SUCCINYLTRANSFERASE"/>
    <property type="match status" value="1"/>
</dbReference>
<dbReference type="PANTHER" id="PTHR19136">
    <property type="entry name" value="MOLYBDENUM COFACTOR GUANYLYLTRANSFERASE"/>
    <property type="match status" value="1"/>
</dbReference>
<dbReference type="Pfam" id="PF14602">
    <property type="entry name" value="Hexapep_2"/>
    <property type="match status" value="1"/>
</dbReference>
<dbReference type="Pfam" id="PF14805">
    <property type="entry name" value="THDPS_N_2"/>
    <property type="match status" value="1"/>
</dbReference>
<dbReference type="SUPFAM" id="SSF51161">
    <property type="entry name" value="Trimeric LpxA-like enzymes"/>
    <property type="match status" value="1"/>
</dbReference>
<dbReference type="PROSITE" id="PS00101">
    <property type="entry name" value="HEXAPEP_TRANSFERASES"/>
    <property type="match status" value="1"/>
</dbReference>
<protein>
    <recommendedName>
        <fullName evidence="1">2,3,4,5-tetrahydropyridine-2,6-dicarboxylate N-succinyltransferase</fullName>
        <ecNumber evidence="1">2.3.1.117</ecNumber>
    </recommendedName>
    <alternativeName>
        <fullName evidence="1">Tetrahydrodipicolinate N-succinyltransferase</fullName>
        <shortName evidence="1">THDP succinyltransferase</shortName>
        <shortName evidence="1">THP succinyltransferase</shortName>
        <shortName evidence="1">Tetrahydropicolinate succinylase</shortName>
    </alternativeName>
</protein>
<gene>
    <name evidence="1" type="primary">dapD</name>
    <name type="ordered locus">PM0658</name>
</gene>
<organism>
    <name type="scientific">Pasteurella multocida (strain Pm70)</name>
    <dbReference type="NCBI Taxonomy" id="272843"/>
    <lineage>
        <taxon>Bacteria</taxon>
        <taxon>Pseudomonadati</taxon>
        <taxon>Pseudomonadota</taxon>
        <taxon>Gammaproteobacteria</taxon>
        <taxon>Pasteurellales</taxon>
        <taxon>Pasteurellaceae</taxon>
        <taxon>Pasteurella</taxon>
    </lineage>
</organism>